<accession>B1WSG7</accession>
<evidence type="ECO:0000255" key="1">
    <source>
        <dbReference type="HAMAP-Rule" id="MF_01642"/>
    </source>
</evidence>
<dbReference type="EC" id="2.6.1.83" evidence="1"/>
<dbReference type="EMBL" id="CP000806">
    <property type="protein sequence ID" value="ACB51953.1"/>
    <property type="molecule type" value="Genomic_DNA"/>
</dbReference>
<dbReference type="RefSeq" id="WP_009544705.1">
    <property type="nucleotide sequence ID" value="NC_010546.1"/>
</dbReference>
<dbReference type="SMR" id="B1WSG7"/>
<dbReference type="STRING" id="43989.cce_2605"/>
<dbReference type="KEGG" id="cyt:cce_2605"/>
<dbReference type="eggNOG" id="COG0436">
    <property type="taxonomic scope" value="Bacteria"/>
</dbReference>
<dbReference type="HOGENOM" id="CLU_051433_0_0_3"/>
<dbReference type="OrthoDB" id="9802328at2"/>
<dbReference type="UniPathway" id="UPA00034">
    <property type="reaction ID" value="UER00466"/>
</dbReference>
<dbReference type="Proteomes" id="UP000001203">
    <property type="component" value="Chromosome circular"/>
</dbReference>
<dbReference type="GO" id="GO:0010285">
    <property type="term" value="F:L,L-diaminopimelate aminotransferase activity"/>
    <property type="evidence" value="ECO:0007669"/>
    <property type="project" value="UniProtKB-UniRule"/>
</dbReference>
<dbReference type="GO" id="GO:0030170">
    <property type="term" value="F:pyridoxal phosphate binding"/>
    <property type="evidence" value="ECO:0007669"/>
    <property type="project" value="UniProtKB-UniRule"/>
</dbReference>
<dbReference type="GO" id="GO:0033362">
    <property type="term" value="P:lysine biosynthetic process via diaminopimelate, diaminopimelate-aminotransferase pathway"/>
    <property type="evidence" value="ECO:0007669"/>
    <property type="project" value="UniProtKB-UniRule"/>
</dbReference>
<dbReference type="CDD" id="cd00609">
    <property type="entry name" value="AAT_like"/>
    <property type="match status" value="1"/>
</dbReference>
<dbReference type="FunFam" id="3.40.640.10:FF:000099">
    <property type="entry name" value="LL-diaminopimelate aminotransferase, chloroplastic"/>
    <property type="match status" value="1"/>
</dbReference>
<dbReference type="Gene3D" id="3.90.1150.10">
    <property type="entry name" value="Aspartate Aminotransferase, domain 1"/>
    <property type="match status" value="1"/>
</dbReference>
<dbReference type="Gene3D" id="3.40.640.10">
    <property type="entry name" value="Type I PLP-dependent aspartate aminotransferase-like (Major domain)"/>
    <property type="match status" value="1"/>
</dbReference>
<dbReference type="HAMAP" id="MF_01642">
    <property type="entry name" value="DapL_aminotrans_1"/>
    <property type="match status" value="1"/>
</dbReference>
<dbReference type="InterPro" id="IPR004839">
    <property type="entry name" value="Aminotransferase_I/II_large"/>
</dbReference>
<dbReference type="InterPro" id="IPR019942">
    <property type="entry name" value="DapL/ALD1"/>
</dbReference>
<dbReference type="InterPro" id="IPR015424">
    <property type="entry name" value="PyrdxlP-dep_Trfase"/>
</dbReference>
<dbReference type="InterPro" id="IPR015421">
    <property type="entry name" value="PyrdxlP-dep_Trfase_major"/>
</dbReference>
<dbReference type="InterPro" id="IPR015422">
    <property type="entry name" value="PyrdxlP-dep_Trfase_small"/>
</dbReference>
<dbReference type="NCBIfam" id="TIGR03542">
    <property type="entry name" value="DAPAT_plant"/>
    <property type="match status" value="1"/>
</dbReference>
<dbReference type="PANTHER" id="PTHR43144">
    <property type="entry name" value="AMINOTRANSFERASE"/>
    <property type="match status" value="1"/>
</dbReference>
<dbReference type="Pfam" id="PF00155">
    <property type="entry name" value="Aminotran_1_2"/>
    <property type="match status" value="1"/>
</dbReference>
<dbReference type="SUPFAM" id="SSF53383">
    <property type="entry name" value="PLP-dependent transferases"/>
    <property type="match status" value="1"/>
</dbReference>
<gene>
    <name evidence="1" type="primary">dapL</name>
    <name type="ordered locus">cce_2605</name>
</gene>
<name>DAPAT_CROS5</name>
<reference key="1">
    <citation type="journal article" date="2008" name="Proc. Natl. Acad. Sci. U.S.A.">
        <title>The genome of Cyanothece 51142, a unicellular diazotrophic cyanobacterium important in the marine nitrogen cycle.</title>
        <authorList>
            <person name="Welsh E.A."/>
            <person name="Liberton M."/>
            <person name="Stoeckel J."/>
            <person name="Loh T."/>
            <person name="Elvitigala T."/>
            <person name="Wang C."/>
            <person name="Wollam A."/>
            <person name="Fulton R.S."/>
            <person name="Clifton S.W."/>
            <person name="Jacobs J.M."/>
            <person name="Aurora R."/>
            <person name="Ghosh B.K."/>
            <person name="Sherman L.A."/>
            <person name="Smith R.D."/>
            <person name="Wilson R.K."/>
            <person name="Pakrasi H.B."/>
        </authorList>
    </citation>
    <scope>NUCLEOTIDE SEQUENCE [LARGE SCALE GENOMIC DNA]</scope>
    <source>
        <strain>ATCC 51142 / BH68</strain>
    </source>
</reference>
<sequence>MATINDNYLKLKAGYLFPEIARRVNTFIEANPEAKIIKLGIGDVTEPLPEACRTAMIKAVEDMGDRSSFKGYGPEQGYGWLREKIAAQDFQARGCDIDASEIFVSDGAKCDTGNILDIFGKNNKIAVTDPVYPVYVDTNVMAGHTGETNEKGEYEGLVYLPISADNHFVADIPSEKVDLIYLCFPNNPTGATATKEYLKAWVDYATANDSIIFFDAAYEAFITDESLPHSIYEIEGAKDCAIEFRSFSKNAGFTGTRCAFTVVPKQLTAKASDGSQVELWKLWNRRQSTKFNGVSYIVQRGAEAVYSEAGKAQIKGLVSFYLENAKIICEQLKSAGFEVYGGVNAPYIWLKTPHNLSSWDFFDKLLQTTHVVGTPGSGFGAAGEGYFRISAFNSRENVEEAMKRITQAFKV</sequence>
<organism>
    <name type="scientific">Crocosphaera subtropica (strain ATCC 51142 / BH68)</name>
    <name type="common">Cyanothece sp. (strain ATCC 51142)</name>
    <dbReference type="NCBI Taxonomy" id="43989"/>
    <lineage>
        <taxon>Bacteria</taxon>
        <taxon>Bacillati</taxon>
        <taxon>Cyanobacteriota</taxon>
        <taxon>Cyanophyceae</taxon>
        <taxon>Oscillatoriophycideae</taxon>
        <taxon>Chroococcales</taxon>
        <taxon>Aphanothecaceae</taxon>
        <taxon>Crocosphaera</taxon>
        <taxon>Crocosphaera subtropica</taxon>
    </lineage>
</organism>
<comment type="function">
    <text evidence="1">Involved in the synthesis of meso-diaminopimelate (m-DAP or DL-DAP), required for both lysine and peptidoglycan biosynthesis. Catalyzes the direct conversion of tetrahydrodipicolinate to LL-diaminopimelate.</text>
</comment>
<comment type="catalytic activity">
    <reaction evidence="1">
        <text>(2S,6S)-2,6-diaminopimelate + 2-oxoglutarate = (S)-2,3,4,5-tetrahydrodipicolinate + L-glutamate + H2O + H(+)</text>
        <dbReference type="Rhea" id="RHEA:23988"/>
        <dbReference type="ChEBI" id="CHEBI:15377"/>
        <dbReference type="ChEBI" id="CHEBI:15378"/>
        <dbReference type="ChEBI" id="CHEBI:16810"/>
        <dbReference type="ChEBI" id="CHEBI:16845"/>
        <dbReference type="ChEBI" id="CHEBI:29985"/>
        <dbReference type="ChEBI" id="CHEBI:57609"/>
        <dbReference type="EC" id="2.6.1.83"/>
    </reaction>
</comment>
<comment type="cofactor">
    <cofactor evidence="1">
        <name>pyridoxal 5'-phosphate</name>
        <dbReference type="ChEBI" id="CHEBI:597326"/>
    </cofactor>
</comment>
<comment type="pathway">
    <text evidence="1">Amino-acid biosynthesis; L-lysine biosynthesis via DAP pathway; LL-2,6-diaminopimelate from (S)-tetrahydrodipicolinate (aminotransferase route): step 1/1.</text>
</comment>
<comment type="subunit">
    <text evidence="1">Homodimer.</text>
</comment>
<comment type="similarity">
    <text evidence="1">Belongs to the class-I pyridoxal-phosphate-dependent aminotransferase family. LL-diaminopimelate aminotransferase subfamily.</text>
</comment>
<protein>
    <recommendedName>
        <fullName evidence="1">LL-diaminopimelate aminotransferase</fullName>
        <shortName evidence="1">DAP-AT</shortName>
        <shortName evidence="1">DAP-aminotransferase</shortName>
        <shortName evidence="1">LL-DAP-aminotransferase</shortName>
        <ecNumber evidence="1">2.6.1.83</ecNumber>
    </recommendedName>
</protein>
<proteinExistence type="inferred from homology"/>
<keyword id="KW-0032">Aminotransferase</keyword>
<keyword id="KW-0663">Pyridoxal phosphate</keyword>
<keyword id="KW-1185">Reference proteome</keyword>
<keyword id="KW-0808">Transferase</keyword>
<feature type="chain" id="PRO_1000186860" description="LL-diaminopimelate aminotransferase">
    <location>
        <begin position="1"/>
        <end position="411"/>
    </location>
</feature>
<feature type="binding site" evidence="1">
    <location>
        <position position="15"/>
    </location>
    <ligand>
        <name>substrate</name>
    </ligand>
</feature>
<feature type="binding site" evidence="1">
    <location>
        <position position="42"/>
    </location>
    <ligand>
        <name>substrate</name>
    </ligand>
</feature>
<feature type="binding site" evidence="1">
    <location>
        <position position="72"/>
    </location>
    <ligand>
        <name>pyridoxal 5'-phosphate</name>
        <dbReference type="ChEBI" id="CHEBI:597326"/>
    </ligand>
</feature>
<feature type="binding site" evidence="1">
    <location>
        <begin position="108"/>
        <end position="109"/>
    </location>
    <ligand>
        <name>pyridoxal 5'-phosphate</name>
        <dbReference type="ChEBI" id="CHEBI:597326"/>
    </ligand>
</feature>
<feature type="binding site" evidence="1">
    <location>
        <position position="109"/>
    </location>
    <ligand>
        <name>substrate</name>
    </ligand>
</feature>
<feature type="binding site" evidence="1">
    <location>
        <position position="132"/>
    </location>
    <ligand>
        <name>pyridoxal 5'-phosphate</name>
        <dbReference type="ChEBI" id="CHEBI:597326"/>
    </ligand>
</feature>
<feature type="binding site" evidence="1">
    <location>
        <position position="132"/>
    </location>
    <ligand>
        <name>substrate</name>
    </ligand>
</feature>
<feature type="binding site" evidence="1">
    <location>
        <position position="187"/>
    </location>
    <ligand>
        <name>pyridoxal 5'-phosphate</name>
        <dbReference type="ChEBI" id="CHEBI:597326"/>
    </ligand>
</feature>
<feature type="binding site" evidence="1">
    <location>
        <position position="187"/>
    </location>
    <ligand>
        <name>substrate</name>
    </ligand>
</feature>
<feature type="binding site" evidence="1">
    <location>
        <position position="218"/>
    </location>
    <ligand>
        <name>pyridoxal 5'-phosphate</name>
        <dbReference type="ChEBI" id="CHEBI:597326"/>
    </ligand>
</feature>
<feature type="binding site" evidence="1">
    <location>
        <begin position="246"/>
        <end position="248"/>
    </location>
    <ligand>
        <name>pyridoxal 5'-phosphate</name>
        <dbReference type="ChEBI" id="CHEBI:597326"/>
    </ligand>
</feature>
<feature type="binding site" evidence="1">
    <location>
        <position position="257"/>
    </location>
    <ligand>
        <name>pyridoxal 5'-phosphate</name>
        <dbReference type="ChEBI" id="CHEBI:597326"/>
    </ligand>
</feature>
<feature type="binding site" evidence="1">
    <location>
        <position position="292"/>
    </location>
    <ligand>
        <name>pyridoxal 5'-phosphate</name>
        <dbReference type="ChEBI" id="CHEBI:597326"/>
    </ligand>
</feature>
<feature type="binding site" evidence="1">
    <location>
        <position position="292"/>
    </location>
    <ligand>
        <name>substrate</name>
    </ligand>
</feature>
<feature type="binding site" evidence="1">
    <location>
        <position position="388"/>
    </location>
    <ligand>
        <name>substrate</name>
    </ligand>
</feature>
<feature type="modified residue" description="N6-(pyridoxal phosphate)lysine" evidence="1">
    <location>
        <position position="249"/>
    </location>
</feature>